<reference key="1">
    <citation type="journal article" date="1997" name="Proc. Natl. Acad. Sci. U.S.A.">
        <title>A human protein related to yeast Cdc6p.</title>
        <authorList>
            <person name="Williams R.S."/>
            <person name="Shohet R.V."/>
            <person name="Stillman B."/>
        </authorList>
    </citation>
    <scope>NUCLEOTIDE SEQUENCE [MRNA]</scope>
</reference>
<reference key="2">
    <citation type="journal article" date="1998" name="Mol. Cell. Biol.">
        <title>Human CDC6/Cdc18 associates with Orc1 and cyclin-cdk and is selectively eliminated from the nucleus at the onset of S phase.</title>
        <authorList>
            <person name="Saha P."/>
            <person name="Chen J."/>
            <person name="Thome K.C."/>
            <person name="Lawlis S.J."/>
            <person name="Hou Z.H."/>
            <person name="Hendricks M."/>
            <person name="Parvin J.D."/>
            <person name="Dutta A."/>
        </authorList>
    </citation>
    <scope>NUCLEOTIDE SEQUENCE [MRNA]</scope>
    <scope>SUBCELLULAR LOCATION</scope>
    <scope>INTERACTION WITH PCNA; ORC1 AND CYCLIN-CDK</scope>
</reference>
<reference key="3">
    <citation type="submission" date="2002-09" db="EMBL/GenBank/DDBJ databases">
        <authorList>
            <consortium name="NIEHS SNPs program"/>
        </authorList>
    </citation>
    <scope>NUCLEOTIDE SEQUENCE [GENOMIC DNA]</scope>
    <scope>VARIANTS ALA-238; ASN-295; MET-299; HIS-378 AND ILE-441</scope>
</reference>
<reference key="4">
    <citation type="journal article" date="2004" name="Genome Res.">
        <title>The status, quality, and expansion of the NIH full-length cDNA project: the Mammalian Gene Collection (MGC).</title>
        <authorList>
            <consortium name="The MGC Project Team"/>
        </authorList>
    </citation>
    <scope>NUCLEOTIDE SEQUENCE [LARGE SCALE MRNA]</scope>
    <scope>VARIANT ILE-441</scope>
    <source>
        <tissue>Brain</tissue>
    </source>
</reference>
<reference key="5">
    <citation type="journal article" date="2004" name="J. Biol. Chem.">
        <title>The regulated association of Cdt1 with minichromosome maintenance proteins and Cdc6 in mammalian cells.</title>
        <authorList>
            <person name="Cook J.G."/>
            <person name="Chasse D.A.D."/>
            <person name="Nevins J.R."/>
        </authorList>
    </citation>
    <scope>INTERACTION WITH CDT1</scope>
</reference>
<reference key="6">
    <citation type="journal article" date="2007" name="Mol. Biol. Cell">
        <title>Cdc6 stability is regulated by the Huwe1 ubiquitin ligase after DNA damage.</title>
        <authorList>
            <person name="Hall J.R."/>
            <person name="Kow E."/>
            <person name="Nevis K.R."/>
            <person name="Lu C.K."/>
            <person name="Luce K.S."/>
            <person name="Zhong Q."/>
            <person name="Cook J.G."/>
        </authorList>
    </citation>
    <scope>INTERACTION WITH HUWE1</scope>
</reference>
<reference key="7">
    <citation type="journal article" date="2008" name="Mol. Cell">
        <title>Kinase-selective enrichment enables quantitative phosphoproteomics of the kinome across the cell cycle.</title>
        <authorList>
            <person name="Daub H."/>
            <person name="Olsen J.V."/>
            <person name="Bairlein M."/>
            <person name="Gnad F."/>
            <person name="Oppermann F.S."/>
            <person name="Korner R."/>
            <person name="Greff Z."/>
            <person name="Keri G."/>
            <person name="Stemmann O."/>
            <person name="Mann M."/>
        </authorList>
    </citation>
    <scope>IDENTIFICATION BY MASS SPECTROMETRY [LARGE SCALE ANALYSIS]</scope>
    <source>
        <tissue>Cervix carcinoma</tissue>
    </source>
</reference>
<reference key="8">
    <citation type="journal article" date="2008" name="PLoS ONE">
        <title>The human TPR protein TTC4 is a putative Hsp90 co-chaperone which interacts with CDC6 and shows alterations in transformed cells.</title>
        <authorList>
            <person name="Crevel G."/>
            <person name="Bennett D."/>
            <person name="Cotterill S."/>
        </authorList>
    </citation>
    <scope>INTERACTION WITH TTC4</scope>
</reference>
<reference key="9">
    <citation type="journal article" date="2008" name="Proc. Natl. Acad. Sci. U.S.A.">
        <title>A quantitative atlas of mitotic phosphorylation.</title>
        <authorList>
            <person name="Dephoure N."/>
            <person name="Zhou C."/>
            <person name="Villen J."/>
            <person name="Beausoleil S.A."/>
            <person name="Bakalarski C.E."/>
            <person name="Elledge S.J."/>
            <person name="Gygi S.P."/>
        </authorList>
    </citation>
    <scope>PHOSPHORYLATION [LARGE SCALE ANALYSIS] AT SER-45</scope>
    <scope>IDENTIFICATION BY MASS SPECTROMETRY [LARGE SCALE ANALYSIS]</scope>
    <source>
        <tissue>Cervix carcinoma</tissue>
    </source>
</reference>
<reference key="10">
    <citation type="journal article" date="2010" name="Sci. Signal.">
        <title>Quantitative phosphoproteomics reveals widespread full phosphorylation site occupancy during mitosis.</title>
        <authorList>
            <person name="Olsen J.V."/>
            <person name="Vermeulen M."/>
            <person name="Santamaria A."/>
            <person name="Kumar C."/>
            <person name="Miller M.L."/>
            <person name="Jensen L.J."/>
            <person name="Gnad F."/>
            <person name="Cox J."/>
            <person name="Jensen T.S."/>
            <person name="Nigg E.A."/>
            <person name="Brunak S."/>
            <person name="Mann M."/>
        </authorList>
    </citation>
    <scope>PHOSPHORYLATION [LARGE SCALE ANALYSIS] AT SER-54 AND SER-127</scope>
    <scope>IDENTIFICATION BY MASS SPECTROMETRY [LARGE SCALE ANALYSIS]</scope>
    <source>
        <tissue>Cervix carcinoma</tissue>
    </source>
</reference>
<reference key="11">
    <citation type="journal article" date="2011" name="Sci. Signal.">
        <title>System-wide temporal characterization of the proteome and phosphoproteome of human embryonic stem cell differentiation.</title>
        <authorList>
            <person name="Rigbolt K.T."/>
            <person name="Prokhorova T.A."/>
            <person name="Akimov V."/>
            <person name="Henningsen J."/>
            <person name="Johansen P.T."/>
            <person name="Kratchmarova I."/>
            <person name="Kassem M."/>
            <person name="Mann M."/>
            <person name="Olsen J.V."/>
            <person name="Blagoev B."/>
        </authorList>
    </citation>
    <scope>IDENTIFICATION BY MASS SPECTROMETRY [LARGE SCALE ANALYSIS]</scope>
</reference>
<reference key="12">
    <citation type="journal article" date="2013" name="FEBS Lett.">
        <title>A role for the Ankyrin repeat containing protein Ankrd17 in Nod1- and Nod2-mediated inflammatory responses.</title>
        <authorList>
            <person name="Menning M."/>
            <person name="Kufer T.A."/>
        </authorList>
    </citation>
    <scope>INTERACTION WITH ANKRD17</scope>
</reference>
<reference key="13">
    <citation type="journal article" date="2013" name="J. Proteome Res.">
        <title>Toward a comprehensive characterization of a human cancer cell phosphoproteome.</title>
        <authorList>
            <person name="Zhou H."/>
            <person name="Di Palma S."/>
            <person name="Preisinger C."/>
            <person name="Peng M."/>
            <person name="Polat A.N."/>
            <person name="Heck A.J."/>
            <person name="Mohammed S."/>
        </authorList>
    </citation>
    <scope>PHOSPHORYLATION [LARGE SCALE ANALYSIS] AT SER-45 AND SER-106</scope>
    <scope>IDENTIFICATION BY MASS SPECTROMETRY [LARGE SCALE ANALYSIS]</scope>
    <source>
        <tissue>Cervix carcinoma</tissue>
        <tissue>Erythroleukemia</tissue>
    </source>
</reference>
<reference key="14">
    <citation type="journal article" date="2015" name="Nucleic Acids Res.">
        <title>Cdt1-binding protein GRWD1 is a novel histone-binding protein that facilitates MCM loading through its influence on chromatin architecture.</title>
        <authorList>
            <person name="Sugimoto N."/>
            <person name="Maehara K."/>
            <person name="Yoshida K."/>
            <person name="Yasukouchi S."/>
            <person name="Osano S."/>
            <person name="Watanabe S."/>
            <person name="Aizawa M."/>
            <person name="Yugawa T."/>
            <person name="Kiyono T."/>
            <person name="Kurumizaka H."/>
            <person name="Ohkawa Y."/>
            <person name="Fujita M."/>
        </authorList>
    </citation>
    <scope>INTERACTION WITH GRWD1</scope>
</reference>
<reference key="15">
    <citation type="journal article" date="2016" name="Nat. Commun.">
        <title>SCF(Cyclin F)-dependent degradation of CDC6 suppresses DNA re-replication.</title>
        <authorList>
            <person name="Walter D."/>
            <person name="Hoffmann S."/>
            <person name="Komseli E.S."/>
            <person name="Rappsilber J."/>
            <person name="Gorgoulis V."/>
            <person name="Soerensen C.S."/>
        </authorList>
    </citation>
    <scope>FUNCTION</scope>
    <scope>INTERACTION WITH CCNF AND CDH1</scope>
    <scope>SUBCELLULAR LOCATION</scope>
    <scope>UBIQUITINATION</scope>
    <scope>MUTAGENESIS OF SER-54; SER-74 AND SER-106</scope>
</reference>
<reference key="16">
    <citation type="journal article" date="2011" name="Nat. Genet.">
        <title>Mutations in the pre-replication complex cause Meier-Gorlin syndrome.</title>
        <authorList>
            <person name="Bicknell L.S."/>
            <person name="Bongers E.M."/>
            <person name="Leitch A."/>
            <person name="Brown S."/>
            <person name="Schoots J."/>
            <person name="Harley M.E."/>
            <person name="Aftimos S."/>
            <person name="Al-Aama J.Y."/>
            <person name="Bober M."/>
            <person name="Brown P.A."/>
            <person name="van Bokhoven H."/>
            <person name="Dean J."/>
            <person name="Edrees A.Y."/>
            <person name="Feingold M."/>
            <person name="Fryer A."/>
            <person name="Hoefsloot L.H."/>
            <person name="Kau N."/>
            <person name="Knoers N.V."/>
            <person name="Mackenzie J."/>
            <person name="Opitz J.M."/>
            <person name="Sarda P."/>
            <person name="Ross A."/>
            <person name="Temple I.K."/>
            <person name="Toutain A."/>
            <person name="Wise C.A."/>
            <person name="Wright M."/>
            <person name="Jackson A.P."/>
        </authorList>
    </citation>
    <scope>VARIANT MGORS5 ARG-323</scope>
</reference>
<evidence type="ECO:0000250" key="1">
    <source>
        <dbReference type="UniProtKB" id="O89033"/>
    </source>
</evidence>
<evidence type="ECO:0000255" key="2"/>
<evidence type="ECO:0000256" key="3">
    <source>
        <dbReference type="SAM" id="MobiDB-lite"/>
    </source>
</evidence>
<evidence type="ECO:0000269" key="4">
    <source>
    </source>
</evidence>
<evidence type="ECO:0000269" key="5">
    <source>
    </source>
</evidence>
<evidence type="ECO:0000269" key="6">
    <source>
    </source>
</evidence>
<evidence type="ECO:0000269" key="7">
    <source>
    </source>
</evidence>
<evidence type="ECO:0000269" key="8">
    <source>
    </source>
</evidence>
<evidence type="ECO:0000269" key="9">
    <source>
    </source>
</evidence>
<evidence type="ECO:0000269" key="10">
    <source>
    </source>
</evidence>
<evidence type="ECO:0000269" key="11">
    <source>
    </source>
</evidence>
<evidence type="ECO:0000269" key="12">
    <source>
    </source>
</evidence>
<evidence type="ECO:0000269" key="13">
    <source ref="3"/>
</evidence>
<evidence type="ECO:0000303" key="14">
    <source>
    </source>
</evidence>
<evidence type="ECO:0000305" key="15"/>
<evidence type="ECO:0007744" key="16">
    <source>
    </source>
</evidence>
<evidence type="ECO:0007744" key="17">
    <source>
    </source>
</evidence>
<evidence type="ECO:0007744" key="18">
    <source>
    </source>
</evidence>
<gene>
    <name type="primary">CDC6</name>
    <name type="synonym">CDC18L</name>
</gene>
<keyword id="KW-0002">3D-structure</keyword>
<keyword id="KW-0067">ATP-binding</keyword>
<keyword id="KW-0131">Cell cycle</keyword>
<keyword id="KW-0132">Cell division</keyword>
<keyword id="KW-0963">Cytoplasm</keyword>
<keyword id="KW-0225">Disease variant</keyword>
<keyword id="KW-0235">DNA replication</keyword>
<keyword id="KW-0242">Dwarfism</keyword>
<keyword id="KW-0498">Mitosis</keyword>
<keyword id="KW-0547">Nucleotide-binding</keyword>
<keyword id="KW-0539">Nucleus</keyword>
<keyword id="KW-0597">Phosphoprotein</keyword>
<keyword id="KW-1267">Proteomics identification</keyword>
<keyword id="KW-1185">Reference proteome</keyword>
<keyword id="KW-0832">Ubl conjugation</keyword>
<protein>
    <recommendedName>
        <fullName>Cell division control protein 6 homolog</fullName>
    </recommendedName>
    <alternativeName>
        <fullName>CDC6-related protein</fullName>
    </alternativeName>
    <alternativeName>
        <fullName>Cdc18-related protein</fullName>
        <shortName>HsCdc18</shortName>
    </alternativeName>
    <alternativeName>
        <fullName>p62(cdc6)</fullName>
        <shortName>HsCDC6</shortName>
    </alternativeName>
</protein>
<dbReference type="EMBL" id="U77949">
    <property type="protein sequence ID" value="AAB38317.1"/>
    <property type="molecule type" value="mRNA"/>
</dbReference>
<dbReference type="EMBL" id="AF022109">
    <property type="protein sequence ID" value="AAC52071.1"/>
    <property type="molecule type" value="mRNA"/>
</dbReference>
<dbReference type="EMBL" id="AY150310">
    <property type="protein sequence ID" value="AAN10296.1"/>
    <property type="molecule type" value="Genomic_DNA"/>
</dbReference>
<dbReference type="EMBL" id="BC025232">
    <property type="protein sequence ID" value="AAH25232.1"/>
    <property type="molecule type" value="mRNA"/>
</dbReference>
<dbReference type="CCDS" id="CCDS11365.1"/>
<dbReference type="RefSeq" id="NP_001245.1">
    <property type="nucleotide sequence ID" value="NM_001254.4"/>
</dbReference>
<dbReference type="RefSeq" id="XP_047293163.1">
    <property type="nucleotide sequence ID" value="XM_047437207.1"/>
</dbReference>
<dbReference type="PDB" id="2CCH">
    <property type="method" value="X-ray"/>
    <property type="resolution" value="1.70 A"/>
    <property type="chains" value="E/F=89-100"/>
</dbReference>
<dbReference type="PDB" id="2CCI">
    <property type="method" value="X-ray"/>
    <property type="resolution" value="2.70 A"/>
    <property type="chains" value="F/I=71-100"/>
</dbReference>
<dbReference type="PDB" id="4I5L">
    <property type="method" value="X-ray"/>
    <property type="resolution" value="2.43 A"/>
    <property type="chains" value="B/E=70-90"/>
</dbReference>
<dbReference type="PDB" id="4I5N">
    <property type="method" value="X-ray"/>
    <property type="resolution" value="2.80 A"/>
    <property type="chains" value="B/E=70-90"/>
</dbReference>
<dbReference type="PDB" id="8HT7">
    <property type="method" value="NMR"/>
    <property type="chains" value="B=7-20"/>
</dbReference>
<dbReference type="PDB" id="8RWV">
    <property type="method" value="EM"/>
    <property type="resolution" value="6.68 A"/>
    <property type="chains" value="F=1-560"/>
</dbReference>
<dbReference type="PDB" id="8S0E">
    <property type="method" value="EM"/>
    <property type="resolution" value="3.80 A"/>
    <property type="chains" value="G=1-560"/>
</dbReference>
<dbReference type="PDBsum" id="2CCH"/>
<dbReference type="PDBsum" id="2CCI"/>
<dbReference type="PDBsum" id="4I5L"/>
<dbReference type="PDBsum" id="4I5N"/>
<dbReference type="PDBsum" id="8HT7"/>
<dbReference type="PDBsum" id="8RWV"/>
<dbReference type="PDBsum" id="8S0E"/>
<dbReference type="EMDB" id="EMD-19566"/>
<dbReference type="EMDB" id="EMD-19623"/>
<dbReference type="SMR" id="Q99741"/>
<dbReference type="BioGRID" id="107426">
    <property type="interactions" value="127"/>
</dbReference>
<dbReference type="CORUM" id="Q99741"/>
<dbReference type="DIP" id="DIP-28154N"/>
<dbReference type="ELM" id="Q99741"/>
<dbReference type="FunCoup" id="Q99741">
    <property type="interactions" value="1856"/>
</dbReference>
<dbReference type="IntAct" id="Q99741">
    <property type="interactions" value="72"/>
</dbReference>
<dbReference type="MINT" id="Q99741"/>
<dbReference type="STRING" id="9606.ENSP00000209728"/>
<dbReference type="ChEMBL" id="CHEMBL2311228"/>
<dbReference type="GlyGen" id="Q99741">
    <property type="glycosylation" value="1 site, 1 O-linked glycan (1 site)"/>
</dbReference>
<dbReference type="iPTMnet" id="Q99741"/>
<dbReference type="PhosphoSitePlus" id="Q99741"/>
<dbReference type="BioMuta" id="CDC6"/>
<dbReference type="DMDM" id="50400620"/>
<dbReference type="jPOST" id="Q99741"/>
<dbReference type="MassIVE" id="Q99741"/>
<dbReference type="PaxDb" id="9606-ENSP00000209728"/>
<dbReference type="PeptideAtlas" id="Q99741"/>
<dbReference type="ProteomicsDB" id="78452"/>
<dbReference type="Pumba" id="Q99741"/>
<dbReference type="Antibodypedia" id="16461">
    <property type="antibodies" value="810 antibodies from 41 providers"/>
</dbReference>
<dbReference type="DNASU" id="990"/>
<dbReference type="Ensembl" id="ENST00000209728.9">
    <property type="protein sequence ID" value="ENSP00000209728.4"/>
    <property type="gene ID" value="ENSG00000094804.12"/>
</dbReference>
<dbReference type="Ensembl" id="ENST00000649662.1">
    <property type="protein sequence ID" value="ENSP00000497345.1"/>
    <property type="gene ID" value="ENSG00000094804.12"/>
</dbReference>
<dbReference type="GeneID" id="990"/>
<dbReference type="KEGG" id="hsa:990"/>
<dbReference type="MANE-Select" id="ENST00000209728.9">
    <property type="protein sequence ID" value="ENSP00000209728.4"/>
    <property type="RefSeq nucleotide sequence ID" value="NM_001254.4"/>
    <property type="RefSeq protein sequence ID" value="NP_001245.1"/>
</dbReference>
<dbReference type="UCSC" id="uc002huj.2">
    <property type="organism name" value="human"/>
</dbReference>
<dbReference type="AGR" id="HGNC:1744"/>
<dbReference type="CTD" id="990"/>
<dbReference type="DisGeNET" id="990"/>
<dbReference type="GeneCards" id="CDC6"/>
<dbReference type="HGNC" id="HGNC:1744">
    <property type="gene designation" value="CDC6"/>
</dbReference>
<dbReference type="HPA" id="ENSG00000094804">
    <property type="expression patterns" value="Tissue enhanced (bone marrow, lymphoid tissue)"/>
</dbReference>
<dbReference type="MalaCards" id="CDC6"/>
<dbReference type="MIM" id="602627">
    <property type="type" value="gene"/>
</dbReference>
<dbReference type="MIM" id="613805">
    <property type="type" value="phenotype"/>
</dbReference>
<dbReference type="neXtProt" id="NX_Q99741"/>
<dbReference type="OpenTargets" id="ENSG00000094804"/>
<dbReference type="Orphanet" id="2554">
    <property type="disease" value="Ear-patella-short stature syndrome"/>
</dbReference>
<dbReference type="PharmGKB" id="PA26271"/>
<dbReference type="VEuPathDB" id="HostDB:ENSG00000094804"/>
<dbReference type="eggNOG" id="KOG2227">
    <property type="taxonomic scope" value="Eukaryota"/>
</dbReference>
<dbReference type="GeneTree" id="ENSGT00530000063498"/>
<dbReference type="HOGENOM" id="CLU_012774_3_0_1"/>
<dbReference type="InParanoid" id="Q99741"/>
<dbReference type="OMA" id="WPTDEVY"/>
<dbReference type="OrthoDB" id="1926878at2759"/>
<dbReference type="PAN-GO" id="Q99741">
    <property type="GO annotations" value="3 GO annotations based on evolutionary models"/>
</dbReference>
<dbReference type="PhylomeDB" id="Q99741"/>
<dbReference type="TreeFam" id="TF101051"/>
<dbReference type="PathwayCommons" id="Q99741"/>
<dbReference type="Reactome" id="R-HSA-1362277">
    <property type="pathway name" value="Transcription of E2F targets under negative control by DREAM complex"/>
</dbReference>
<dbReference type="Reactome" id="R-HSA-176187">
    <property type="pathway name" value="Activation of ATR in response to replication stress"/>
</dbReference>
<dbReference type="Reactome" id="R-HSA-68689">
    <property type="pathway name" value="CDC6 association with the ORC:origin complex"/>
</dbReference>
<dbReference type="Reactome" id="R-HSA-68867">
    <property type="pathway name" value="Assembly of the pre-replicative complex"/>
</dbReference>
<dbReference type="Reactome" id="R-HSA-68949">
    <property type="pathway name" value="Orc1 removal from chromatin"/>
</dbReference>
<dbReference type="Reactome" id="R-HSA-68962">
    <property type="pathway name" value="Activation of the pre-replicative complex"/>
</dbReference>
<dbReference type="Reactome" id="R-HSA-69017">
    <property type="pathway name" value="CDK-mediated phosphorylation and removal of Cdc6"/>
</dbReference>
<dbReference type="Reactome" id="R-HSA-69205">
    <property type="pathway name" value="G1/S-Specific Transcription"/>
</dbReference>
<dbReference type="SignaLink" id="Q99741"/>
<dbReference type="SIGNOR" id="Q99741"/>
<dbReference type="BioGRID-ORCS" id="990">
    <property type="hits" value="752 hits in 1170 CRISPR screens"/>
</dbReference>
<dbReference type="ChiTaRS" id="CDC6">
    <property type="organism name" value="human"/>
</dbReference>
<dbReference type="EvolutionaryTrace" id="Q99741"/>
<dbReference type="GeneWiki" id="CDC6"/>
<dbReference type="GenomeRNAi" id="990"/>
<dbReference type="Pharos" id="Q99741">
    <property type="development level" value="Tbio"/>
</dbReference>
<dbReference type="PRO" id="PR:Q99741"/>
<dbReference type="Proteomes" id="UP000005640">
    <property type="component" value="Chromosome 17"/>
</dbReference>
<dbReference type="RNAct" id="Q99741">
    <property type="molecule type" value="protein"/>
</dbReference>
<dbReference type="Bgee" id="ENSG00000094804">
    <property type="expression patterns" value="Expressed in ventricular zone and 114 other cell types or tissues"/>
</dbReference>
<dbReference type="ExpressionAtlas" id="Q99741">
    <property type="expression patterns" value="baseline and differential"/>
</dbReference>
<dbReference type="GO" id="GO:0005737">
    <property type="term" value="C:cytoplasm"/>
    <property type="evidence" value="ECO:0000304"/>
    <property type="project" value="ProtInc"/>
</dbReference>
<dbReference type="GO" id="GO:0005829">
    <property type="term" value="C:cytosol"/>
    <property type="evidence" value="ECO:0000314"/>
    <property type="project" value="HPA"/>
</dbReference>
<dbReference type="GO" id="GO:0045171">
    <property type="term" value="C:intercellular bridge"/>
    <property type="evidence" value="ECO:0000314"/>
    <property type="project" value="HPA"/>
</dbReference>
<dbReference type="GO" id="GO:0072686">
    <property type="term" value="C:mitotic spindle"/>
    <property type="evidence" value="ECO:0000314"/>
    <property type="project" value="HPA"/>
</dbReference>
<dbReference type="GO" id="GO:0005654">
    <property type="term" value="C:nucleoplasm"/>
    <property type="evidence" value="ECO:0000314"/>
    <property type="project" value="HPA"/>
</dbReference>
<dbReference type="GO" id="GO:0005634">
    <property type="term" value="C:nucleus"/>
    <property type="evidence" value="ECO:0000314"/>
    <property type="project" value="UniProtKB"/>
</dbReference>
<dbReference type="GO" id="GO:0051233">
    <property type="term" value="C:spindle midzone"/>
    <property type="evidence" value="ECO:0000314"/>
    <property type="project" value="BHF-UCL"/>
</dbReference>
<dbReference type="GO" id="GO:0000922">
    <property type="term" value="C:spindle pole"/>
    <property type="evidence" value="ECO:0000314"/>
    <property type="project" value="BHF-UCL"/>
</dbReference>
<dbReference type="GO" id="GO:0005524">
    <property type="term" value="F:ATP binding"/>
    <property type="evidence" value="ECO:0007669"/>
    <property type="project" value="UniProtKB-KW"/>
</dbReference>
<dbReference type="GO" id="GO:0016887">
    <property type="term" value="F:ATP hydrolysis activity"/>
    <property type="evidence" value="ECO:0007669"/>
    <property type="project" value="InterPro"/>
</dbReference>
<dbReference type="GO" id="GO:0003682">
    <property type="term" value="F:chromatin binding"/>
    <property type="evidence" value="ECO:0007669"/>
    <property type="project" value="Ensembl"/>
</dbReference>
<dbReference type="GO" id="GO:0003688">
    <property type="term" value="F:DNA replication origin binding"/>
    <property type="evidence" value="ECO:0000318"/>
    <property type="project" value="GO_Central"/>
</dbReference>
<dbReference type="GO" id="GO:0000166">
    <property type="term" value="F:nucleotide binding"/>
    <property type="evidence" value="ECO:0000304"/>
    <property type="project" value="ProtInc"/>
</dbReference>
<dbReference type="GO" id="GO:0120283">
    <property type="term" value="F:protein serine/threonine kinase binding"/>
    <property type="evidence" value="ECO:0000353"/>
    <property type="project" value="BHF-UCL"/>
</dbReference>
<dbReference type="GO" id="GO:0051301">
    <property type="term" value="P:cell division"/>
    <property type="evidence" value="ECO:0007669"/>
    <property type="project" value="UniProtKB-KW"/>
</dbReference>
<dbReference type="GO" id="GO:1904385">
    <property type="term" value="P:cellular response to angiotensin"/>
    <property type="evidence" value="ECO:0007669"/>
    <property type="project" value="Ensembl"/>
</dbReference>
<dbReference type="GO" id="GO:1904117">
    <property type="term" value="P:cellular response to vasopressin"/>
    <property type="evidence" value="ECO:0007669"/>
    <property type="project" value="Ensembl"/>
</dbReference>
<dbReference type="GO" id="GO:0000076">
    <property type="term" value="P:DNA replication checkpoint signaling"/>
    <property type="evidence" value="ECO:0000304"/>
    <property type="project" value="ProtInc"/>
</dbReference>
<dbReference type="GO" id="GO:0006270">
    <property type="term" value="P:DNA replication initiation"/>
    <property type="evidence" value="ECO:0000318"/>
    <property type="project" value="GO_Central"/>
</dbReference>
<dbReference type="GO" id="GO:0033314">
    <property type="term" value="P:mitotic DNA replication checkpoint signaling"/>
    <property type="evidence" value="ECO:0000318"/>
    <property type="project" value="GO_Central"/>
</dbReference>
<dbReference type="GO" id="GO:0008285">
    <property type="term" value="P:negative regulation of cell population proliferation"/>
    <property type="evidence" value="ECO:0000304"/>
    <property type="project" value="ProtInc"/>
</dbReference>
<dbReference type="GO" id="GO:0008156">
    <property type="term" value="P:negative regulation of DNA replication"/>
    <property type="evidence" value="ECO:0000304"/>
    <property type="project" value="ProtInc"/>
</dbReference>
<dbReference type="GO" id="GO:0051984">
    <property type="term" value="P:positive regulation of chromosome segregation"/>
    <property type="evidence" value="ECO:0000314"/>
    <property type="project" value="BHF-UCL"/>
</dbReference>
<dbReference type="GO" id="GO:0032467">
    <property type="term" value="P:positive regulation of cytokinesis"/>
    <property type="evidence" value="ECO:0000315"/>
    <property type="project" value="BHF-UCL"/>
</dbReference>
<dbReference type="GO" id="GO:0048146">
    <property type="term" value="P:positive regulation of fibroblast proliferation"/>
    <property type="evidence" value="ECO:0007669"/>
    <property type="project" value="Ensembl"/>
</dbReference>
<dbReference type="GO" id="GO:0000079">
    <property type="term" value="P:regulation of cyclin-dependent protein serine/threonine kinase activity"/>
    <property type="evidence" value="ECO:0000304"/>
    <property type="project" value="ProtInc"/>
</dbReference>
<dbReference type="GO" id="GO:0030071">
    <property type="term" value="P:regulation of mitotic metaphase/anaphase transition"/>
    <property type="evidence" value="ECO:0000315"/>
    <property type="project" value="BHF-UCL"/>
</dbReference>
<dbReference type="GO" id="GO:0007089">
    <property type="term" value="P:traversing start control point of mitotic cell cycle"/>
    <property type="evidence" value="ECO:0000304"/>
    <property type="project" value="ProtInc"/>
</dbReference>
<dbReference type="CDD" id="cd00009">
    <property type="entry name" value="AAA"/>
    <property type="match status" value="1"/>
</dbReference>
<dbReference type="CDD" id="cd08768">
    <property type="entry name" value="Cdc6_C"/>
    <property type="match status" value="1"/>
</dbReference>
<dbReference type="FunFam" id="1.10.10.10:FF:000265">
    <property type="entry name" value="Cell division control protein"/>
    <property type="match status" value="1"/>
</dbReference>
<dbReference type="FunFam" id="1.10.8.60:FF:000058">
    <property type="entry name" value="Cell division control protein"/>
    <property type="match status" value="1"/>
</dbReference>
<dbReference type="FunFam" id="3.40.50.300:FF:000547">
    <property type="entry name" value="Cell division control protein"/>
    <property type="match status" value="1"/>
</dbReference>
<dbReference type="Gene3D" id="1.10.8.60">
    <property type="match status" value="1"/>
</dbReference>
<dbReference type="Gene3D" id="3.40.50.300">
    <property type="entry name" value="P-loop containing nucleotide triphosphate hydrolases"/>
    <property type="match status" value="1"/>
</dbReference>
<dbReference type="Gene3D" id="1.10.10.10">
    <property type="entry name" value="Winged helix-like DNA-binding domain superfamily/Winged helix DNA-binding domain"/>
    <property type="match status" value="1"/>
</dbReference>
<dbReference type="IDEAL" id="IID00099"/>
<dbReference type="InterPro" id="IPR003593">
    <property type="entry name" value="AAA+_ATPase"/>
</dbReference>
<dbReference type="InterPro" id="IPR041664">
    <property type="entry name" value="AAA_16"/>
</dbReference>
<dbReference type="InterPro" id="IPR016314">
    <property type="entry name" value="Cdc6/18"/>
</dbReference>
<dbReference type="InterPro" id="IPR015163">
    <property type="entry name" value="Cdc6_C"/>
</dbReference>
<dbReference type="InterPro" id="IPR054425">
    <property type="entry name" value="Cdc6_ORC1-like_ATPase_lid"/>
</dbReference>
<dbReference type="InterPro" id="IPR050311">
    <property type="entry name" value="ORC1/CDC6"/>
</dbReference>
<dbReference type="InterPro" id="IPR027417">
    <property type="entry name" value="P-loop_NTPase"/>
</dbReference>
<dbReference type="InterPro" id="IPR036388">
    <property type="entry name" value="WH-like_DNA-bd_sf"/>
</dbReference>
<dbReference type="InterPro" id="IPR036390">
    <property type="entry name" value="WH_DNA-bd_sf"/>
</dbReference>
<dbReference type="PANTHER" id="PTHR10763:SF26">
    <property type="entry name" value="CELL DIVISION CONTROL PROTEIN 6 HOMOLOG"/>
    <property type="match status" value="1"/>
</dbReference>
<dbReference type="PANTHER" id="PTHR10763">
    <property type="entry name" value="CELL DIVISION CONTROL PROTEIN 6-RELATED"/>
    <property type="match status" value="1"/>
</dbReference>
<dbReference type="Pfam" id="PF13191">
    <property type="entry name" value="AAA_16"/>
    <property type="match status" value="1"/>
</dbReference>
<dbReference type="Pfam" id="PF22606">
    <property type="entry name" value="Cdc6-ORC-like_ATPase_lid"/>
    <property type="match status" value="1"/>
</dbReference>
<dbReference type="Pfam" id="PF09079">
    <property type="entry name" value="Cdc6_C"/>
    <property type="match status" value="1"/>
</dbReference>
<dbReference type="PIRSF" id="PIRSF001767">
    <property type="entry name" value="Cdc6"/>
    <property type="match status" value="1"/>
</dbReference>
<dbReference type="SMART" id="SM00382">
    <property type="entry name" value="AAA"/>
    <property type="match status" value="1"/>
</dbReference>
<dbReference type="SMART" id="SM01074">
    <property type="entry name" value="Cdc6_C"/>
    <property type="match status" value="1"/>
</dbReference>
<dbReference type="SUPFAM" id="SSF52540">
    <property type="entry name" value="P-loop containing nucleoside triphosphate hydrolases"/>
    <property type="match status" value="1"/>
</dbReference>
<dbReference type="SUPFAM" id="SSF46785">
    <property type="entry name" value="Winged helix' DNA-binding domain"/>
    <property type="match status" value="1"/>
</dbReference>
<feature type="chain" id="PRO_0000150979" description="Cell division control protein 6 homolog">
    <location>
        <begin position="1"/>
        <end position="560"/>
    </location>
</feature>
<feature type="region of interest" description="Disordered" evidence="3">
    <location>
        <begin position="1"/>
        <end position="91"/>
    </location>
</feature>
<feature type="short sequence motif" description="Cy" evidence="14">
    <location>
        <begin position="93"/>
        <end position="100"/>
    </location>
</feature>
<feature type="compositionally biased region" description="Polar residues" evidence="3">
    <location>
        <begin position="1"/>
        <end position="12"/>
    </location>
</feature>
<feature type="compositionally biased region" description="Polar residues" evidence="3">
    <location>
        <begin position="35"/>
        <end position="44"/>
    </location>
</feature>
<feature type="binding site" evidence="2">
    <location>
        <begin position="202"/>
        <end position="209"/>
    </location>
    <ligand>
        <name>ATP</name>
        <dbReference type="ChEBI" id="CHEBI:30616"/>
    </ligand>
</feature>
<feature type="modified residue" description="Phosphoserine" evidence="16 18">
    <location>
        <position position="45"/>
    </location>
</feature>
<feature type="modified residue" description="Phosphoserine" evidence="17">
    <location>
        <position position="54"/>
    </location>
</feature>
<feature type="modified residue" description="Phosphothreonine" evidence="1">
    <location>
        <position position="67"/>
    </location>
</feature>
<feature type="modified residue" description="Phosphoserine" evidence="1">
    <location>
        <position position="74"/>
    </location>
</feature>
<feature type="modified residue" description="Phosphoserine" evidence="18">
    <location>
        <position position="106"/>
    </location>
</feature>
<feature type="modified residue" description="Phosphoserine" evidence="17">
    <location>
        <position position="127"/>
    </location>
</feature>
<feature type="modified residue" description="Phosphoserine" evidence="1">
    <location>
        <position position="419"/>
    </location>
</feature>
<feature type="sequence variant" id="VAR_019349" description="In dbSNP:rs4135010." evidence="13">
    <original>T</original>
    <variation>A</variation>
    <location>
        <position position="238"/>
    </location>
</feature>
<feature type="sequence variant" id="VAR_019350" description="In dbSNP:rs4135012." evidence="13">
    <original>D</original>
    <variation>N</variation>
    <location>
        <position position="295"/>
    </location>
</feature>
<feature type="sequence variant" id="VAR_019351" description="In dbSNP:rs4135013." evidence="13">
    <original>T</original>
    <variation>M</variation>
    <location>
        <position position="299"/>
    </location>
</feature>
<feature type="sequence variant" id="VAR_065493" description="In MGORS5; dbSNP:rs387906842." evidence="8">
    <original>T</original>
    <variation>R</variation>
    <location>
        <position position="323"/>
    </location>
</feature>
<feature type="sequence variant" id="VAR_019352" description="In dbSNP:rs4135016." evidence="13">
    <original>R</original>
    <variation>H</variation>
    <location>
        <position position="378"/>
    </location>
</feature>
<feature type="sequence variant" id="VAR_019353" description="In dbSNP:rs13706." evidence="5 13">
    <original>V</original>
    <variation>I</variation>
    <location>
        <position position="441"/>
    </location>
</feature>
<feature type="mutagenesis site" description="Does not change protein stability after CHX addition during mitosis; when associated with A-74 and A-106." evidence="11">
    <original>S</original>
    <variation>A</variation>
    <location>
        <position position="54"/>
    </location>
</feature>
<feature type="mutagenesis site" description="Does not change protein stability after CHX addition during mitosis; when associated with D-74 and D-106." evidence="11">
    <original>S</original>
    <variation>D</variation>
    <location>
        <position position="54"/>
    </location>
</feature>
<feature type="mutagenesis site" description="Does not change protein stability after CHX addition during mitosis; when associated with A-54 and A-106." evidence="11">
    <original>S</original>
    <variation>A</variation>
    <location>
        <position position="74"/>
    </location>
</feature>
<feature type="mutagenesis site" description="Does not change protein stability after CHX addition during mitosis; when associated with D-54 and D-106." evidence="11">
    <original>S</original>
    <variation>D</variation>
    <location>
        <position position="74"/>
    </location>
</feature>
<feature type="mutagenesis site" description="Disrupts the interaction with CCNF. Does not disrupt the interaction with CDH1. Increases protein stability." evidence="11">
    <location>
        <begin position="93"/>
        <end position="100"/>
    </location>
</feature>
<feature type="mutagenesis site" description="Does not change protein stability after CHX addition during mitosis; when associated with A-54 and A-74." evidence="11">
    <original>S</original>
    <variation>A</variation>
    <location>
        <position position="106"/>
    </location>
</feature>
<feature type="mutagenesis site" description="Does not change protein stability after CHX addition during mitosis; when associated with D-54 and D-74." evidence="11">
    <original>S</original>
    <variation>D</variation>
    <location>
        <position position="106"/>
    </location>
</feature>
<accession>Q99741</accession>
<accession>Q8TB30</accession>
<proteinExistence type="evidence at protein level"/>
<sequence length="560" mass="62720">MPQTRSQAQATISFPKRKLSRALNKAKNSSDAKLEPTNVQTVTCSPRVKALPLSPRKRLGDDNLCNTPHLPPCSPPKQGKKENGPPHSHTLKGRRLVFDNQLTIKSPSKRELAKVHQNKILSSVRKSQEITTNSEQRCPLKKESACVRLFKQEGTCYQQAKLVLNTAVPDRLPAREREMDVIRNFLREHICGKKAGSLYLSGAPGTGKTACLSRILQDLKKELKGFKTIMLNCMSLRTAQAVFPAIAQEICQEEVSRPAGKDMMRKLEKHMTAEKGPMIVLVLDEMDQLDSKGQDVLYTLFEWPWLSNSHLVLIGIANTLDLTDRILPRLQAREKCKPQLLNFPPYTRNQIVTILQDRLNQVSRDQVLDNAAVQFCARKVSAVSGDVRKALDVCRRAIEIVESDVKSQTILKPLSECKSPSEPLIPKRVGLIHISQVISEVDGNRMTLSQEGAQDSFPLQQKILVCSLMLLIRQLKIKEVTLGKLYEAYSKVCRKQQVAAVDQSECLSLSGLLEARGILGLKRNKETRLTKVFFKIEEKEIEHALKDKALIGNILATGLP</sequence>
<organism>
    <name type="scientific">Homo sapiens</name>
    <name type="common">Human</name>
    <dbReference type="NCBI Taxonomy" id="9606"/>
    <lineage>
        <taxon>Eukaryota</taxon>
        <taxon>Metazoa</taxon>
        <taxon>Chordata</taxon>
        <taxon>Craniata</taxon>
        <taxon>Vertebrata</taxon>
        <taxon>Euteleostomi</taxon>
        <taxon>Mammalia</taxon>
        <taxon>Eutheria</taxon>
        <taxon>Euarchontoglires</taxon>
        <taxon>Primates</taxon>
        <taxon>Haplorrhini</taxon>
        <taxon>Catarrhini</taxon>
        <taxon>Hominidae</taxon>
        <taxon>Homo</taxon>
    </lineage>
</organism>
<name>CDC6_HUMAN</name>
<comment type="function">
    <text>Involved in the initiation of DNA replication. Also participates in checkpoint controls that ensure DNA replication is completed before mitosis is initiated.</text>
</comment>
<comment type="subunit">
    <text evidence="4 6 7 9 10 11 12">Interacts with PCNA, ORC1, cyclin-CDK (PubMed:9566895). Interacts with HUWE1 (PubMed:17567951). Interacts with ANKRD17 (PubMed:23711367). Interacts with GRWD1; origin binding of GRWD1 is dependent on CDC6 (PubMed:25990725). Interacts with CDT1; are mutually dependent on one another for loading MCM complexes onto chromatin (PubMed:14672932). Interacts with TTC4 (PubMed:18320024). Interacts (via Cy motif) with CCNF; the interaction takes place during G2 and M phase (PubMed:26818844). Interacts with CDH1 (PubMed:26818844).</text>
</comment>
<comment type="interaction">
    <interactant intactId="EBI-374862">
        <id>Q99741</id>
    </interactant>
    <interactant intactId="EBI-444308">
        <id>P06493</id>
        <label>CDK1</label>
    </interactant>
    <organismsDiffer>false</organismsDiffer>
    <experiments>2</experiments>
</comment>
<comment type="interaction">
    <interactant intactId="EBI-374862">
        <id>Q99741</id>
    </interactant>
    <interactant intactId="EBI-375077">
        <id>P38936</id>
        <label>CDKN1A</label>
    </interactant>
    <organismsDiffer>false</organismsDiffer>
    <experiments>2</experiments>
</comment>
<comment type="interaction">
    <interactant intactId="EBI-374862">
        <id>Q99741</id>
    </interactant>
    <interactant intactId="EBI-456953">
        <id>Q9H211</id>
        <label>CDT1</label>
    </interactant>
    <organismsDiffer>false</organismsDiffer>
    <experiments>3</experiments>
</comment>
<comment type="interaction">
    <interactant intactId="EBI-374862">
        <id>Q99741</id>
    </interactant>
    <interactant intactId="EBI-476768">
        <id>P53350</id>
        <label>PLK1</label>
    </interactant>
    <organismsDiffer>false</organismsDiffer>
    <experiments>6</experiments>
</comment>
<comment type="subcellular location">
    <subcellularLocation>
        <location evidence="11 12">Nucleus</location>
    </subcellularLocation>
    <subcellularLocation>
        <location evidence="12">Cytoplasm</location>
    </subcellularLocation>
    <text evidence="12">The protein is nuclear in G1 and cytoplasmic in S-phase cells (PubMed:9566895).</text>
</comment>
<comment type="PTM">
    <text evidence="11">Ubiquitinated by the SCF(CCNF) E3 ubiquitin-protein ligase complex.</text>
</comment>
<comment type="disease" evidence="8">
    <disease id="DI-03047">
        <name>Meier-Gorlin syndrome 5</name>
        <acronym>MGORS5</acronym>
        <description>A syndrome characterized by bilateral microtia, aplasia/hypoplasia of the patellae, and severe intrauterine and postnatal growth retardation with short stature and poor weight gain. Additional clinical findings include anomalies of cranial sutures, microcephaly, apparently low-set and simple ears, microstomia, full lips, highly arched or cleft palate, micrognathia, genitourinary tract anomalies, and various skeletal anomalies. While almost all cases have primordial dwarfism with substantial prenatal and postnatal growth retardation, not all cases have microcephaly, and microtia and absent/hypoplastic patella are absent in some. Despite the presence of microcephaly, intellect is usually normal.</description>
        <dbReference type="MIM" id="613805"/>
    </disease>
    <text>The disease is caused by variants affecting the gene represented in this entry.</text>
</comment>
<comment type="similarity">
    <text evidence="15">Belongs to the CDC6/cdc18 family.</text>
</comment>
<comment type="online information" name="Atlas of Genetics and Cytogenetics in Oncology and Haematology">
    <link uri="https://atlasgeneticsoncology.org/gene/40014/CDC6"/>
</comment>